<dbReference type="EC" id="3.5.3.1" evidence="1"/>
<dbReference type="EMBL" id="LK023119">
    <property type="protein sequence ID" value="VUC54373.1"/>
    <property type="molecule type" value="Genomic_DNA"/>
</dbReference>
<dbReference type="SMR" id="A0A509AF89"/>
<dbReference type="FunCoup" id="A0A509AF89">
    <property type="interactions" value="29"/>
</dbReference>
<dbReference type="STRING" id="5823.A0A509AF89"/>
<dbReference type="VEuPathDB" id="PlasmoDB:PBANKA_0414800"/>
<dbReference type="InParanoid" id="A0A509AF89"/>
<dbReference type="OMA" id="YKEFRYA"/>
<dbReference type="UniPathway" id="UPA00158">
    <property type="reaction ID" value="UER00270"/>
</dbReference>
<dbReference type="Proteomes" id="UP000074855">
    <property type="component" value="Chromosome 4"/>
</dbReference>
<dbReference type="GO" id="GO:0005829">
    <property type="term" value="C:cytosol"/>
    <property type="evidence" value="ECO:0007669"/>
    <property type="project" value="TreeGrafter"/>
</dbReference>
<dbReference type="GO" id="GO:0005634">
    <property type="term" value="C:nucleus"/>
    <property type="evidence" value="ECO:0007669"/>
    <property type="project" value="TreeGrafter"/>
</dbReference>
<dbReference type="GO" id="GO:0004053">
    <property type="term" value="F:arginase activity"/>
    <property type="evidence" value="ECO:0007669"/>
    <property type="project" value="UniProtKB-EC"/>
</dbReference>
<dbReference type="GO" id="GO:0030145">
    <property type="term" value="F:manganese ion binding"/>
    <property type="evidence" value="ECO:0007669"/>
    <property type="project" value="TreeGrafter"/>
</dbReference>
<dbReference type="GO" id="GO:0019547">
    <property type="term" value="P:arginine catabolic process to ornithine"/>
    <property type="evidence" value="ECO:0000315"/>
    <property type="project" value="UniProtKB"/>
</dbReference>
<dbReference type="GO" id="GO:0000050">
    <property type="term" value="P:urea cycle"/>
    <property type="evidence" value="ECO:0007669"/>
    <property type="project" value="UniProtKB-UniPathway"/>
</dbReference>
<dbReference type="FunFam" id="3.40.800.10:FF:000012">
    <property type="entry name" value="Arginase"/>
    <property type="match status" value="1"/>
</dbReference>
<dbReference type="Gene3D" id="3.40.800.10">
    <property type="entry name" value="Ureohydrolase domain"/>
    <property type="match status" value="1"/>
</dbReference>
<dbReference type="InterPro" id="IPR014033">
    <property type="entry name" value="Arginase"/>
</dbReference>
<dbReference type="InterPro" id="IPR006035">
    <property type="entry name" value="Ureohydrolase"/>
</dbReference>
<dbReference type="InterPro" id="IPR023696">
    <property type="entry name" value="Ureohydrolase_dom_sf"/>
</dbReference>
<dbReference type="NCBIfam" id="TIGR01229">
    <property type="entry name" value="rocF_arginase"/>
    <property type="match status" value="1"/>
</dbReference>
<dbReference type="PANTHER" id="PTHR43782">
    <property type="entry name" value="ARGINASE"/>
    <property type="match status" value="1"/>
</dbReference>
<dbReference type="PANTHER" id="PTHR43782:SF3">
    <property type="entry name" value="ARGINASE"/>
    <property type="match status" value="1"/>
</dbReference>
<dbReference type="Pfam" id="PF00491">
    <property type="entry name" value="Arginase"/>
    <property type="match status" value="1"/>
</dbReference>
<dbReference type="PRINTS" id="PR00116">
    <property type="entry name" value="ARGINASE"/>
</dbReference>
<dbReference type="SUPFAM" id="SSF52768">
    <property type="entry name" value="Arginase/deacetylase"/>
    <property type="match status" value="1"/>
</dbReference>
<dbReference type="PROSITE" id="PS51409">
    <property type="entry name" value="ARGINASE_2"/>
    <property type="match status" value="1"/>
</dbReference>
<organism evidence="11">
    <name type="scientific">Plasmodium berghei (strain Anka)</name>
    <dbReference type="NCBI Taxonomy" id="5823"/>
    <lineage>
        <taxon>Eukaryota</taxon>
        <taxon>Sar</taxon>
        <taxon>Alveolata</taxon>
        <taxon>Apicomplexa</taxon>
        <taxon>Aconoidasida</taxon>
        <taxon>Haemosporida</taxon>
        <taxon>Plasmodiidae</taxon>
        <taxon>Plasmodium</taxon>
        <taxon>Plasmodium (Vinckeia)</taxon>
    </lineage>
</organism>
<gene>
    <name evidence="1" type="primary">ARG</name>
    <name evidence="10" type="ORF">PBANKA_0414800</name>
</gene>
<name>ARGI_PLABA</name>
<protein>
    <recommendedName>
        <fullName evidence="7">Arginase</fullName>
        <ecNumber evidence="1">3.5.3.1</ecNumber>
    </recommendedName>
</protein>
<sequence>MYECIQDYLTNHKDEKNIYVNKCISIVGSPLSAGQSLSGVNKACDNLRKFGLHDVIKAVGWGYEDIGNIGEKIPINGFLKQENIEKENDQINNNNPSYYNNIKNAEVIGKFSEKLFQTMSSELKKKNFILNIGGDHGVAFSSILSMLQTYNNLKVIWIDAHGDINIPETSPSGNYHGMSLAHALGLFKKKVPYFEWSEKLLHLKPENVAIIGIRDIDKYEKIILKKCNINYYTMFDIDKKGIYNIICEALNKIDPNKNSPIHISLDIDSVDSIYAPGTGTIAKGGLNYREIHLLIKSISDTKRVVSMDIVEYNPLLDESDKAVHGDSLPIDPNATKTGKLCLELIARVLGNDIV</sequence>
<feature type="chain" id="PRO_0000457082" description="Arginase">
    <location>
        <begin position="1"/>
        <end position="354"/>
    </location>
</feature>
<feature type="binding site" evidence="2">
    <location>
        <position position="136"/>
    </location>
    <ligand>
        <name>Mn(2+)</name>
        <dbReference type="ChEBI" id="CHEBI:29035"/>
        <label>1</label>
    </ligand>
</feature>
<feature type="binding site" evidence="2">
    <location>
        <position position="159"/>
    </location>
    <ligand>
        <name>Mn(2+)</name>
        <dbReference type="ChEBI" id="CHEBI:29035"/>
        <label>1</label>
    </ligand>
</feature>
<feature type="binding site" evidence="2">
    <location>
        <position position="159"/>
    </location>
    <ligand>
        <name>Mn(2+)</name>
        <dbReference type="ChEBI" id="CHEBI:29035"/>
        <label>2</label>
    </ligand>
</feature>
<feature type="binding site" evidence="2">
    <location>
        <position position="161"/>
    </location>
    <ligand>
        <name>Mn(2+)</name>
        <dbReference type="ChEBI" id="CHEBI:29035"/>
        <label>2</label>
    </ligand>
</feature>
<feature type="binding site" evidence="2">
    <location>
        <position position="163"/>
    </location>
    <ligand>
        <name>Mn(2+)</name>
        <dbReference type="ChEBI" id="CHEBI:29035"/>
        <label>1</label>
    </ligand>
</feature>
<feature type="binding site" evidence="1">
    <location>
        <position position="165"/>
    </location>
    <ligand>
        <name>L-arginine</name>
        <dbReference type="ChEBI" id="CHEBI:32682"/>
    </ligand>
</feature>
<feature type="binding site" evidence="1">
    <location>
        <position position="172"/>
    </location>
    <ligand>
        <name>L-arginine</name>
        <dbReference type="ChEBI" id="CHEBI:32682"/>
    </ligand>
</feature>
<feature type="binding site" evidence="1">
    <location>
        <position position="217"/>
    </location>
    <ligand>
        <name>L-arginine</name>
        <dbReference type="ChEBI" id="CHEBI:32682"/>
    </ligand>
</feature>
<feature type="binding site" evidence="2">
    <location>
        <position position="266"/>
    </location>
    <ligand>
        <name>Mn(2+)</name>
        <dbReference type="ChEBI" id="CHEBI:29035"/>
        <label>1</label>
    </ligand>
</feature>
<feature type="binding site" evidence="2">
    <location>
        <position position="266"/>
    </location>
    <ligand>
        <name>Mn(2+)</name>
        <dbReference type="ChEBI" id="CHEBI:29035"/>
        <label>2</label>
    </ligand>
</feature>
<feature type="binding site" evidence="2">
    <location>
        <position position="268"/>
    </location>
    <ligand>
        <name>Mn(2+)</name>
        <dbReference type="ChEBI" id="CHEBI:29035"/>
        <label>2</label>
    </ligand>
</feature>
<reference evidence="11" key="1">
    <citation type="journal article" date="2014" name="BMC Biol.">
        <title>A comprehensive evaluation of rodent malaria parasite genomes and gene expression.</title>
        <authorList>
            <person name="Otto T.D."/>
            <person name="Bohme U."/>
            <person name="Jackson A.P."/>
            <person name="Hunt M."/>
            <person name="Franke-Fayard B."/>
            <person name="Hoeijmakers W.A."/>
            <person name="Religa A.A."/>
            <person name="Robertson L."/>
            <person name="Sanders M."/>
            <person name="Ogun S.A."/>
            <person name="Cunningham D."/>
            <person name="Erhart A."/>
            <person name="Billker O."/>
            <person name="Khan S.M."/>
            <person name="Stunnenberg H.G."/>
            <person name="Langhorne J."/>
            <person name="Holder A.A."/>
            <person name="Waters A.P."/>
            <person name="Newbold C.I."/>
            <person name="Pain A."/>
            <person name="Berriman M."/>
            <person name="Janse C.J."/>
        </authorList>
    </citation>
    <scope>NUCLEOTIDE SEQUENCE [LARGE SCALE GENOMIC DNA]</scope>
    <source>
        <strain evidence="11">ANKA</strain>
    </source>
</reference>
<reference evidence="8" key="2">
    <citation type="journal article" date="2009" name="Cell Host Microbe">
        <title>Host-parasite interactions revealed by Plasmodium falciparum metabolomics.</title>
        <authorList>
            <person name="Olszewski K.L."/>
            <person name="Morrisey J.M."/>
            <person name="Wilinski D."/>
            <person name="Burns J.M."/>
            <person name="Vaidya A.B."/>
            <person name="Rabinowitz J.D."/>
            <person name="Llinas M."/>
        </authorList>
    </citation>
    <scope>FUNCTION</scope>
    <scope>PATHWAY</scope>
    <scope>DISRUPTION PHENOTYPE</scope>
</reference>
<reference evidence="8" key="3">
    <citation type="journal article" date="2010" name="Biochemistry">
        <title>Crystal structure of arginase from Plasmodium falciparum and implications for L-arginine depletion in malarial infection.</title>
        <authorList>
            <person name="Dowling D.P."/>
            <person name="Ilies M."/>
            <person name="Olszewski K.L."/>
            <person name="Portugal S."/>
            <person name="Mota M.M."/>
            <person name="Llinas M."/>
            <person name="Christianson D.W."/>
        </authorList>
    </citation>
    <scope>FUNCTION</scope>
    <scope>DISRUPTION PHENOTYPE</scope>
</reference>
<reference evidence="8" key="4">
    <citation type="journal article" date="2017" name="Sci. Rep.">
        <title>Uptake and metabolism of arginine impact Plasmodium development in the liver.</title>
        <authorList>
            <person name="Meireles P."/>
            <person name="Mendes A.M."/>
            <person name="Aroeira R.I."/>
            <person name="Mounce B.C."/>
            <person name="Vignuzzi M."/>
            <person name="Staines H.M."/>
            <person name="Prudencio M."/>
        </authorList>
    </citation>
    <scope>FUNCTION</scope>
    <scope>DISRUPTION PHENOTYPE</scope>
</reference>
<proteinExistence type="inferred from homology"/>
<comment type="function">
    <text evidence="4 5 6">Catalyzes the hydrolysis of L-arginine into urea and L-ornithine, which is a precursor for polyamine biosynthesis (PubMed:19218089). May play a role in parasite intra-hepatic development during the host liver stage (PubMed:20527960, PubMed:28642498).</text>
</comment>
<comment type="catalytic activity">
    <reaction evidence="1">
        <text>L-arginine + H2O = urea + L-ornithine</text>
        <dbReference type="Rhea" id="RHEA:20569"/>
        <dbReference type="ChEBI" id="CHEBI:15377"/>
        <dbReference type="ChEBI" id="CHEBI:16199"/>
        <dbReference type="ChEBI" id="CHEBI:32682"/>
        <dbReference type="ChEBI" id="CHEBI:46911"/>
        <dbReference type="EC" id="3.5.3.1"/>
    </reaction>
</comment>
<comment type="cofactor">
    <cofactor evidence="3">
        <name>Mn(2+)</name>
        <dbReference type="ChEBI" id="CHEBI:29035"/>
    </cofactor>
    <text evidence="3">Binds 2 manganese ions per subunit.</text>
</comment>
<comment type="pathway">
    <text evidence="9">Nitrogen metabolism; urea cycle; L-ornithine and urea from L-arginine: step 1/1.</text>
</comment>
<comment type="subunit">
    <text evidence="1">Homotrimer; oligomerization is dependent on Mn(2+) binding.</text>
</comment>
<comment type="disruption phenotype">
    <text evidence="4 5 6">Mosquito salivary gland sporozoites have a reduced ability to infect BALB/c mice (PubMed:20527960). Parasite load in the liver of C57BL/6 mouse infected with knockout sporozoites gives mixed effects; in some cases, the parasite load in the liver is not affected and in other cases, it is reduced (PubMed:28642498). In infected BALB/c mice, causes no differences in blood parasitemia levels and in the onset of morbidity (PubMed:19218089). Severe reduction in ornithine production during murine erythrocyte infection (PubMed:19218089).</text>
</comment>
<comment type="similarity">
    <text evidence="2 3">Belongs to the arginase family.</text>
</comment>
<evidence type="ECO:0000250" key="1">
    <source>
        <dbReference type="UniProtKB" id="Q8I384"/>
    </source>
</evidence>
<evidence type="ECO:0000255" key="2">
    <source>
        <dbReference type="PROSITE-ProRule" id="PRU00742"/>
    </source>
</evidence>
<evidence type="ECO:0000255" key="3">
    <source>
        <dbReference type="RuleBase" id="RU361159"/>
    </source>
</evidence>
<evidence type="ECO:0000269" key="4">
    <source>
    </source>
</evidence>
<evidence type="ECO:0000269" key="5">
    <source>
    </source>
</evidence>
<evidence type="ECO:0000269" key="6">
    <source>
    </source>
</evidence>
<evidence type="ECO:0000303" key="7">
    <source>
    </source>
</evidence>
<evidence type="ECO:0000305" key="8"/>
<evidence type="ECO:0000305" key="9">
    <source>
    </source>
</evidence>
<evidence type="ECO:0000312" key="10">
    <source>
        <dbReference type="EMBL" id="VUC54373.1"/>
    </source>
</evidence>
<evidence type="ECO:0000312" key="11">
    <source>
        <dbReference type="Proteomes" id="UP000074855"/>
    </source>
</evidence>
<keyword id="KW-0056">Arginine metabolism</keyword>
<keyword id="KW-0378">Hydrolase</keyword>
<keyword id="KW-0464">Manganese</keyword>
<keyword id="KW-0479">Metal-binding</keyword>
<keyword id="KW-1185">Reference proteome</keyword>
<accession>A0A509AF89</accession>